<organism>
    <name type="scientific">Methylorubrum extorquens (strain CM4 / NCIMB 13688)</name>
    <name type="common">Methylobacterium extorquens</name>
    <dbReference type="NCBI Taxonomy" id="440085"/>
    <lineage>
        <taxon>Bacteria</taxon>
        <taxon>Pseudomonadati</taxon>
        <taxon>Pseudomonadota</taxon>
        <taxon>Alphaproteobacteria</taxon>
        <taxon>Hyphomicrobiales</taxon>
        <taxon>Methylobacteriaceae</taxon>
        <taxon>Methylorubrum</taxon>
    </lineage>
</organism>
<dbReference type="EMBL" id="CP001298">
    <property type="protein sequence ID" value="ACK81338.1"/>
    <property type="molecule type" value="Genomic_DNA"/>
</dbReference>
<dbReference type="RefSeq" id="WP_003601773.1">
    <property type="nucleotide sequence ID" value="NC_011757.1"/>
</dbReference>
<dbReference type="SMR" id="B7L060"/>
<dbReference type="GeneID" id="72987759"/>
<dbReference type="KEGG" id="mch:Mchl_0402"/>
<dbReference type="HOGENOM" id="CLU_128074_1_0_5"/>
<dbReference type="Proteomes" id="UP000002385">
    <property type="component" value="Chromosome"/>
</dbReference>
<dbReference type="GO" id="GO:0070987">
    <property type="term" value="P:error-free translesion synthesis"/>
    <property type="evidence" value="ECO:0007669"/>
    <property type="project" value="TreeGrafter"/>
</dbReference>
<dbReference type="Gene3D" id="2.60.40.1470">
    <property type="entry name" value="ApaG domain"/>
    <property type="match status" value="1"/>
</dbReference>
<dbReference type="HAMAP" id="MF_00791">
    <property type="entry name" value="ApaG"/>
    <property type="match status" value="1"/>
</dbReference>
<dbReference type="InterPro" id="IPR007474">
    <property type="entry name" value="ApaG_domain"/>
</dbReference>
<dbReference type="InterPro" id="IPR036767">
    <property type="entry name" value="ApaG_sf"/>
</dbReference>
<dbReference type="InterPro" id="IPR023065">
    <property type="entry name" value="Uncharacterised_ApaG"/>
</dbReference>
<dbReference type="NCBIfam" id="NF003967">
    <property type="entry name" value="PRK05461.1"/>
    <property type="match status" value="1"/>
</dbReference>
<dbReference type="PANTHER" id="PTHR14289">
    <property type="entry name" value="F-BOX ONLY PROTEIN 3"/>
    <property type="match status" value="1"/>
</dbReference>
<dbReference type="PANTHER" id="PTHR14289:SF16">
    <property type="entry name" value="POLYMERASE DELTA-INTERACTING PROTEIN 2"/>
    <property type="match status" value="1"/>
</dbReference>
<dbReference type="Pfam" id="PF04379">
    <property type="entry name" value="DUF525"/>
    <property type="match status" value="1"/>
</dbReference>
<dbReference type="SUPFAM" id="SSF110069">
    <property type="entry name" value="ApaG-like"/>
    <property type="match status" value="1"/>
</dbReference>
<dbReference type="PROSITE" id="PS51087">
    <property type="entry name" value="APAG"/>
    <property type="match status" value="1"/>
</dbReference>
<name>APAG_METC4</name>
<feature type="chain" id="PRO_1000148499" description="Protein ApaG">
    <location>
        <begin position="1"/>
        <end position="130"/>
    </location>
</feature>
<feature type="domain" description="ApaG" evidence="1">
    <location>
        <begin position="3"/>
        <end position="127"/>
    </location>
</feature>
<proteinExistence type="inferred from homology"/>
<evidence type="ECO:0000255" key="1">
    <source>
        <dbReference type="HAMAP-Rule" id="MF_00791"/>
    </source>
</evidence>
<protein>
    <recommendedName>
        <fullName evidence="1">Protein ApaG</fullName>
    </recommendedName>
</protein>
<accession>B7L060</accession>
<sequence>MYKAETRGIMVTVEPRFVEEESSPGESRYFFAYTVEIVNNGSEQVQLRSRHWRIIDGRGACQEVRGAGVVGKQPVLEPGESFSYTSGCPLTTPDGLMAGSYTMSTIGGESFEAEIPAFSLDSPHLRRVVH</sequence>
<gene>
    <name evidence="1" type="primary">apaG</name>
    <name type="ordered locus">Mchl_0402</name>
</gene>
<reference key="1">
    <citation type="submission" date="2008-12" db="EMBL/GenBank/DDBJ databases">
        <title>Complete sequence of chromosome of Methylobacterium chloromethanicum CM4.</title>
        <authorList>
            <consortium name="US DOE Joint Genome Institute"/>
            <person name="Lucas S."/>
            <person name="Copeland A."/>
            <person name="Lapidus A."/>
            <person name="Glavina del Rio T."/>
            <person name="Dalin E."/>
            <person name="Tice H."/>
            <person name="Bruce D."/>
            <person name="Goodwin L."/>
            <person name="Pitluck S."/>
            <person name="Chertkov O."/>
            <person name="Brettin T."/>
            <person name="Detter J.C."/>
            <person name="Han C."/>
            <person name="Larimer F."/>
            <person name="Land M."/>
            <person name="Hauser L."/>
            <person name="Kyrpides N."/>
            <person name="Mikhailova N."/>
            <person name="Marx C."/>
            <person name="Richardson P."/>
        </authorList>
    </citation>
    <scope>NUCLEOTIDE SEQUENCE [LARGE SCALE GENOMIC DNA]</scope>
    <source>
        <strain>CM4 / NCIMB 13688</strain>
    </source>
</reference>